<accession>D4DKQ4</accession>
<protein>
    <recommendedName>
        <fullName>Subtilisin-like protease 8</fullName>
        <ecNumber>3.4.21.-</ecNumber>
    </recommendedName>
</protein>
<reference key="1">
    <citation type="journal article" date="2011" name="Genome Biol.">
        <title>Comparative and functional genomics provide insights into the pathogenicity of dermatophytic fungi.</title>
        <authorList>
            <person name="Burmester A."/>
            <person name="Shelest E."/>
            <person name="Gloeckner G."/>
            <person name="Heddergott C."/>
            <person name="Schindler S."/>
            <person name="Staib P."/>
            <person name="Heidel A."/>
            <person name="Felder M."/>
            <person name="Petzold A."/>
            <person name="Szafranski K."/>
            <person name="Feuermann M."/>
            <person name="Pedruzzi I."/>
            <person name="Priebe S."/>
            <person name="Groth M."/>
            <person name="Winkler R."/>
            <person name="Li W."/>
            <person name="Kniemeyer O."/>
            <person name="Schroeckh V."/>
            <person name="Hertweck C."/>
            <person name="Hube B."/>
            <person name="White T.C."/>
            <person name="Platzer M."/>
            <person name="Guthke R."/>
            <person name="Heitman J."/>
            <person name="Woestemeyer J."/>
            <person name="Zipfel P.F."/>
            <person name="Monod M."/>
            <person name="Brakhage A.A."/>
        </authorList>
    </citation>
    <scope>NUCLEOTIDE SEQUENCE [LARGE SCALE GENOMIC DNA]</scope>
    <source>
        <strain>HKI 0517</strain>
    </source>
</reference>
<proteinExistence type="inferred from homology"/>
<name>SUB8_TRIVH</name>
<keyword id="KW-0325">Glycoprotein</keyword>
<keyword id="KW-0378">Hydrolase</keyword>
<keyword id="KW-0645">Protease</keyword>
<keyword id="KW-0964">Secreted</keyword>
<keyword id="KW-0720">Serine protease</keyword>
<keyword id="KW-0732">Signal</keyword>
<keyword id="KW-0843">Virulence</keyword>
<keyword id="KW-0865">Zymogen</keyword>
<comment type="function">
    <text evidence="1">Secreted subtilisin-like serine protease with keratinolytic activity that contributes to pathogenicity.</text>
</comment>
<comment type="subcellular location">
    <subcellularLocation>
        <location evidence="1">Secreted</location>
    </subcellularLocation>
</comment>
<comment type="similarity">
    <text evidence="4">Belongs to the peptidase S8 family.</text>
</comment>
<dbReference type="EC" id="3.4.21.-"/>
<dbReference type="EMBL" id="ACYE01000479">
    <property type="protein sequence ID" value="EFE37558.1"/>
    <property type="molecule type" value="Genomic_DNA"/>
</dbReference>
<dbReference type="RefSeq" id="XP_003018203.1">
    <property type="nucleotide sequence ID" value="XM_003018157.1"/>
</dbReference>
<dbReference type="SMR" id="D4DKQ4"/>
<dbReference type="GlyCosmos" id="D4DKQ4">
    <property type="glycosylation" value="2 sites, No reported glycans"/>
</dbReference>
<dbReference type="GeneID" id="9579574"/>
<dbReference type="KEGG" id="tve:TRV_07778"/>
<dbReference type="HOGENOM" id="CLU_011263_1_4_1"/>
<dbReference type="OrthoDB" id="3236at34384"/>
<dbReference type="Proteomes" id="UP000008383">
    <property type="component" value="Unassembled WGS sequence"/>
</dbReference>
<dbReference type="GO" id="GO:0005576">
    <property type="term" value="C:extracellular region"/>
    <property type="evidence" value="ECO:0007669"/>
    <property type="project" value="UniProtKB-SubCell"/>
</dbReference>
<dbReference type="GO" id="GO:0004252">
    <property type="term" value="F:serine-type endopeptidase activity"/>
    <property type="evidence" value="ECO:0007669"/>
    <property type="project" value="InterPro"/>
</dbReference>
<dbReference type="GO" id="GO:0006508">
    <property type="term" value="P:proteolysis"/>
    <property type="evidence" value="ECO:0007669"/>
    <property type="project" value="UniProtKB-KW"/>
</dbReference>
<dbReference type="CDD" id="cd04077">
    <property type="entry name" value="Peptidases_S8_PCSK9_ProteinaseK_like"/>
    <property type="match status" value="1"/>
</dbReference>
<dbReference type="FunFam" id="3.30.70.80:FF:000006">
    <property type="entry name" value="Autophagic serine protease Alp2"/>
    <property type="match status" value="1"/>
</dbReference>
<dbReference type="FunFam" id="3.40.50.200:FF:000007">
    <property type="entry name" value="Subtilisin-like serine protease"/>
    <property type="match status" value="1"/>
</dbReference>
<dbReference type="Gene3D" id="3.30.70.80">
    <property type="entry name" value="Peptidase S8 propeptide/proteinase inhibitor I9"/>
    <property type="match status" value="1"/>
</dbReference>
<dbReference type="Gene3D" id="3.40.50.200">
    <property type="entry name" value="Peptidase S8/S53 domain"/>
    <property type="match status" value="1"/>
</dbReference>
<dbReference type="InterPro" id="IPR034193">
    <property type="entry name" value="PCSK9_ProteinaseK-like"/>
</dbReference>
<dbReference type="InterPro" id="IPR000209">
    <property type="entry name" value="Peptidase_S8/S53_dom"/>
</dbReference>
<dbReference type="InterPro" id="IPR036852">
    <property type="entry name" value="Peptidase_S8/S53_dom_sf"/>
</dbReference>
<dbReference type="InterPro" id="IPR022398">
    <property type="entry name" value="Peptidase_S8_His-AS"/>
</dbReference>
<dbReference type="InterPro" id="IPR023828">
    <property type="entry name" value="Peptidase_S8_Ser-AS"/>
</dbReference>
<dbReference type="InterPro" id="IPR050131">
    <property type="entry name" value="Peptidase_S8_subtilisin-like"/>
</dbReference>
<dbReference type="InterPro" id="IPR015500">
    <property type="entry name" value="Peptidase_S8_subtilisin-rel"/>
</dbReference>
<dbReference type="InterPro" id="IPR010259">
    <property type="entry name" value="S8pro/Inhibitor_I9"/>
</dbReference>
<dbReference type="InterPro" id="IPR037045">
    <property type="entry name" value="S8pro/Inhibitor_I9_sf"/>
</dbReference>
<dbReference type="PANTHER" id="PTHR43806:SF11">
    <property type="entry name" value="CEREVISIN-RELATED"/>
    <property type="match status" value="1"/>
</dbReference>
<dbReference type="PANTHER" id="PTHR43806">
    <property type="entry name" value="PEPTIDASE S8"/>
    <property type="match status" value="1"/>
</dbReference>
<dbReference type="Pfam" id="PF05922">
    <property type="entry name" value="Inhibitor_I9"/>
    <property type="match status" value="1"/>
</dbReference>
<dbReference type="Pfam" id="PF00082">
    <property type="entry name" value="Peptidase_S8"/>
    <property type="match status" value="1"/>
</dbReference>
<dbReference type="PRINTS" id="PR00723">
    <property type="entry name" value="SUBTILISIN"/>
</dbReference>
<dbReference type="SUPFAM" id="SSF52743">
    <property type="entry name" value="Subtilisin-like"/>
    <property type="match status" value="1"/>
</dbReference>
<dbReference type="PROSITE" id="PS51892">
    <property type="entry name" value="SUBTILASE"/>
    <property type="match status" value="1"/>
</dbReference>
<dbReference type="PROSITE" id="PS00137">
    <property type="entry name" value="SUBTILASE_HIS"/>
    <property type="match status" value="1"/>
</dbReference>
<dbReference type="PROSITE" id="PS00138">
    <property type="entry name" value="SUBTILASE_SER"/>
    <property type="match status" value="1"/>
</dbReference>
<sequence>MKGLLSLSVLPVLAYASPMIVDSIHQNAAPILSSTNAKDIPDSYIVVFKKGVTSTSALAHQNWVQDIHTSVESKRMKKRNQFTFKNEAFDGLKHTFDFAGGFLGYSGHFDEEVIEQVRRHPDVEYIERDSEVHTLKAATENGAPWGLARISHRDKLNFGTFNKYIYASQGGEGVDAYVIDTGTNIDHVDFEGRASWGKTIPQGDDDVDGNGHGTHCSGTIAGKKYGVAKKANVYAVKVLRTSGSGTMSDVVKGVQWAAESHLKSVAEAKKGNRKGFKGSVANMSLGGGKSVTLDRVVDQAVAVGMHFAVAAGNDNADACNYSPAGSKNSITVGASTLADERAYFSNFGKCTDIFAPGLNIQSTWIGSKHAVNTISGTSMASPHICGLLAYFLSLQPASDSAFAVAEITPAEMKENMISIASKDLLSDIPSDTPNLLAWNGGGSDDYKKIIGGARENDTTEFSSTLTEKLEKLAEEGLTAIYNELKDAVVA</sequence>
<evidence type="ECO:0000250" key="1"/>
<evidence type="ECO:0000255" key="2"/>
<evidence type="ECO:0000255" key="3">
    <source>
        <dbReference type="PROSITE-ProRule" id="PRU01240"/>
    </source>
</evidence>
<evidence type="ECO:0000305" key="4"/>
<feature type="signal peptide" evidence="2">
    <location>
        <begin position="1"/>
        <end position="26"/>
    </location>
</feature>
<feature type="propeptide" id="PRO_0000406382" evidence="1">
    <location>
        <begin position="27"/>
        <end position="134"/>
    </location>
</feature>
<feature type="chain" id="PRO_0000406383" description="Subtilisin-like protease 8">
    <location>
        <begin position="135"/>
        <end position="490"/>
    </location>
</feature>
<feature type="domain" description="Inhibitor I9" evidence="2">
    <location>
        <begin position="43"/>
        <end position="134"/>
    </location>
</feature>
<feature type="domain" description="Peptidase S8" evidence="3">
    <location>
        <begin position="144"/>
        <end position="450"/>
    </location>
</feature>
<feature type="active site" description="Charge relay system" evidence="3">
    <location>
        <position position="180"/>
    </location>
</feature>
<feature type="active site" description="Charge relay system" evidence="3">
    <location>
        <position position="212"/>
    </location>
</feature>
<feature type="active site" description="Charge relay system" evidence="3">
    <location>
        <position position="378"/>
    </location>
</feature>
<feature type="glycosylation site" description="N-linked (GlcNAc...) asparagine" evidence="2">
    <location>
        <position position="282"/>
    </location>
</feature>
<feature type="glycosylation site" description="N-linked (GlcNAc...) asparagine" evidence="2">
    <location>
        <position position="456"/>
    </location>
</feature>
<gene>
    <name type="primary">SUB8</name>
    <name type="ORF">TRV_07778</name>
</gene>
<organism>
    <name type="scientific">Trichophyton verrucosum (strain HKI 0517)</name>
    <dbReference type="NCBI Taxonomy" id="663202"/>
    <lineage>
        <taxon>Eukaryota</taxon>
        <taxon>Fungi</taxon>
        <taxon>Dikarya</taxon>
        <taxon>Ascomycota</taxon>
        <taxon>Pezizomycotina</taxon>
        <taxon>Eurotiomycetes</taxon>
        <taxon>Eurotiomycetidae</taxon>
        <taxon>Onygenales</taxon>
        <taxon>Arthrodermataceae</taxon>
        <taxon>Trichophyton</taxon>
    </lineage>
</organism>